<organism>
    <name type="scientific">Escherichia phage T7</name>
    <name type="common">Bacteriophage T7</name>
    <dbReference type="NCBI Taxonomy" id="10760"/>
    <lineage>
        <taxon>Viruses</taxon>
        <taxon>Duplodnaviria</taxon>
        <taxon>Heunggongvirae</taxon>
        <taxon>Uroviricota</taxon>
        <taxon>Caudoviricetes</taxon>
        <taxon>Autographiviridae</taxon>
        <taxon>Studiervirinae</taxon>
        <taxon>Teseptimavirus</taxon>
        <taxon>Teseptimavirus T7</taxon>
    </lineage>
</organism>
<feature type="chain" id="PRO_0000106491" description="Protein 4.2">
    <location>
        <begin position="1"/>
        <end position="112"/>
    </location>
</feature>
<feature type="region of interest" description="Disordered" evidence="1">
    <location>
        <begin position="64"/>
        <end position="93"/>
    </location>
</feature>
<feature type="compositionally biased region" description="Polar residues" evidence="1">
    <location>
        <begin position="70"/>
        <end position="92"/>
    </location>
</feature>
<evidence type="ECO:0000256" key="1">
    <source>
        <dbReference type="SAM" id="MobiDB-lite"/>
    </source>
</evidence>
<name>Y42_BPT7</name>
<accession>P03783</accession>
<organismHost>
    <name type="scientific">Escherichia coli</name>
    <dbReference type="NCBI Taxonomy" id="562"/>
</organismHost>
<keyword id="KW-1185">Reference proteome</keyword>
<gene>
    <name type="ordered locus">4.2</name>
</gene>
<reference key="1">
    <citation type="journal article" date="1983" name="J. Mol. Biol.">
        <title>Complete nucleotide sequence of bacteriophage T7 DNA and the locations of T7 genetic elements.</title>
        <authorList>
            <person name="Dunn J.J."/>
            <person name="Studier F.W."/>
        </authorList>
    </citation>
    <scope>NUCLEOTIDE SEQUENCE [LARGE SCALE GENOMIC DNA]</scope>
</reference>
<proteinExistence type="predicted"/>
<sequence length="112" mass="12654">MRKVAPFLLLTYVVLAHYANYLILLLPLSVISKAICLTLSSFVFSSAALLVILVSLATWNTTRKPDGLNHQVTQGKKSHTQSQQTGPTTLTSDRILDDFPDDYEKFRWRVPF</sequence>
<dbReference type="EMBL" id="V01146">
    <property type="protein sequence ID" value="CAA24408.1"/>
    <property type="molecule type" value="Genomic_DNA"/>
</dbReference>
<dbReference type="PIR" id="A04408">
    <property type="entry name" value="W4BP27"/>
</dbReference>
<dbReference type="RefSeq" id="NP_041978.1">
    <property type="nucleotide sequence ID" value="NC_001604.1"/>
</dbReference>
<dbReference type="SMR" id="P03783"/>
<dbReference type="KEGG" id="vg:1261021"/>
<dbReference type="OrthoDB" id="16244at10239"/>
<dbReference type="Proteomes" id="UP000000840">
    <property type="component" value="Genome"/>
</dbReference>
<dbReference type="InterPro" id="IPR035148">
    <property type="entry name" value="DUF5480"/>
</dbReference>
<dbReference type="Pfam" id="PF17576">
    <property type="entry name" value="DUF5480"/>
    <property type="match status" value="1"/>
</dbReference>
<protein>
    <recommendedName>
        <fullName>Protein 4.2</fullName>
    </recommendedName>
    <alternativeName>
        <fullName>Gene product 4.2</fullName>
        <shortName>Gp4.2</shortName>
    </alternativeName>
</protein>